<protein>
    <recommendedName>
        <fullName>Endoplasmic reticulum aminopeptidase 2</fullName>
        <ecNumber>3.4.11.-</ecNumber>
    </recommendedName>
</protein>
<comment type="function">
    <text evidence="1">Aminopeptidase that plays a central role in peptide trimming, a step required for the generation of most HLA class I-binding peptides. Peptide trimming is essential to customize longer precursor peptides to fit them to the correct length required for presentation on MHC class I molecules. Preferentially hydrolyzes the basic residues Arg and Lys (By similarity).</text>
</comment>
<comment type="cofactor">
    <cofactor evidence="1">
        <name>Zn(2+)</name>
        <dbReference type="ChEBI" id="CHEBI:29105"/>
    </cofactor>
    <text evidence="1">Binds 1 zinc ion per subunit.</text>
</comment>
<comment type="subunit">
    <text evidence="1">Heterodimer with ERAP1.</text>
</comment>
<comment type="subcellular location">
    <subcellularLocation>
        <location evidence="1">Endoplasmic reticulum membrane</location>
        <topology evidence="1">Single-pass type II membrane protein</topology>
    </subcellularLocation>
</comment>
<comment type="PTM">
    <text evidence="1">N-glycosylated.</text>
</comment>
<comment type="similarity">
    <text evidence="4">Belongs to the peptidase M1 family.</text>
</comment>
<name>ERAP2_BOVIN</name>
<feature type="chain" id="PRO_0000315718" description="Endoplasmic reticulum aminopeptidase 2">
    <location>
        <begin position="1"/>
        <end position="954"/>
    </location>
</feature>
<feature type="topological domain" description="Cytoplasmic" evidence="2">
    <location>
        <begin position="1"/>
        <end position="7"/>
    </location>
</feature>
<feature type="transmembrane region" description="Helical; Signal-anchor for type II membrane protein" evidence="2">
    <location>
        <begin position="8"/>
        <end position="28"/>
    </location>
</feature>
<feature type="topological domain" description="Lumenal" evidence="2">
    <location>
        <begin position="29"/>
        <end position="954"/>
    </location>
</feature>
<feature type="active site" description="Proton acceptor" evidence="3">
    <location>
        <position position="365"/>
    </location>
</feature>
<feature type="binding site" evidence="1">
    <location>
        <position position="194"/>
    </location>
    <ligand>
        <name>substrate</name>
    </ligand>
</feature>
<feature type="binding site" evidence="1">
    <location>
        <begin position="328"/>
        <end position="332"/>
    </location>
    <ligand>
        <name>substrate</name>
    </ligand>
</feature>
<feature type="binding site" evidence="3">
    <location>
        <position position="364"/>
    </location>
    <ligand>
        <name>Zn(2+)</name>
        <dbReference type="ChEBI" id="CHEBI:29105"/>
        <note>catalytic</note>
    </ligand>
</feature>
<feature type="binding site" evidence="3">
    <location>
        <position position="368"/>
    </location>
    <ligand>
        <name>Zn(2+)</name>
        <dbReference type="ChEBI" id="CHEBI:29105"/>
        <note>catalytic</note>
    </ligand>
</feature>
<feature type="binding site" evidence="3">
    <location>
        <position position="387"/>
    </location>
    <ligand>
        <name>Zn(2+)</name>
        <dbReference type="ChEBI" id="CHEBI:29105"/>
        <note>catalytic</note>
    </ligand>
</feature>
<feature type="site" description="Transition state stabilizer" evidence="1">
    <location>
        <position position="449"/>
    </location>
</feature>
<feature type="glycosylation site" description="N-linked (GlcNAc...) asparagine" evidence="2">
    <location>
        <position position="79"/>
    </location>
</feature>
<feature type="glycosylation site" description="N-linked (GlcNAc...) asparagine" evidence="2">
    <location>
        <position position="113"/>
    </location>
</feature>
<feature type="glycosylation site" description="N-linked (GlcNAc...) asparagine" evidence="2">
    <location>
        <position position="399"/>
    </location>
</feature>
<feature type="glycosylation site" description="N-linked (GlcNAc...) asparagine" evidence="2">
    <location>
        <position position="644"/>
    </location>
</feature>
<feature type="disulfide bond" evidence="1">
    <location>
        <begin position="415"/>
        <end position="454"/>
    </location>
</feature>
<feature type="disulfide bond" evidence="1">
    <location>
        <begin position="753"/>
        <end position="760"/>
    </location>
</feature>
<dbReference type="EC" id="3.4.11.-"/>
<dbReference type="EMBL" id="BC149475">
    <property type="protein sequence ID" value="AAI49476.1"/>
    <property type="molecule type" value="mRNA"/>
</dbReference>
<dbReference type="RefSeq" id="NP_001069096.2">
    <property type="nucleotide sequence ID" value="NM_001075628.2"/>
</dbReference>
<dbReference type="RefSeq" id="XP_005209817.1">
    <property type="nucleotide sequence ID" value="XM_005209760.5"/>
</dbReference>
<dbReference type="SMR" id="A6QPT7"/>
<dbReference type="FunCoup" id="A6QPT7">
    <property type="interactions" value="15"/>
</dbReference>
<dbReference type="STRING" id="9913.ENSBTAP00000067643"/>
<dbReference type="MEROPS" id="M01.024"/>
<dbReference type="GlyCosmos" id="A6QPT7">
    <property type="glycosylation" value="4 sites, No reported glycans"/>
</dbReference>
<dbReference type="GlyGen" id="A6QPT7">
    <property type="glycosylation" value="4 sites"/>
</dbReference>
<dbReference type="PaxDb" id="9913-ENSBTAP00000001164"/>
<dbReference type="GeneID" id="513572"/>
<dbReference type="KEGG" id="bta:513572"/>
<dbReference type="CTD" id="64167"/>
<dbReference type="VEuPathDB" id="HostDB:ENSBTAG00000039275"/>
<dbReference type="eggNOG" id="KOG1046">
    <property type="taxonomic scope" value="Eukaryota"/>
</dbReference>
<dbReference type="HOGENOM" id="CLU_003705_0_1_1"/>
<dbReference type="InParanoid" id="A6QPT7"/>
<dbReference type="OrthoDB" id="10031169at2759"/>
<dbReference type="TreeFam" id="TF300395"/>
<dbReference type="Reactome" id="R-BTA-983170">
    <property type="pathway name" value="Antigen Presentation: Folding, assembly and peptide loading of class I MHC"/>
</dbReference>
<dbReference type="Proteomes" id="UP000009136">
    <property type="component" value="Chromosome 7"/>
</dbReference>
<dbReference type="Bgee" id="ENSBTAG00000039275">
    <property type="expression patterns" value="Expressed in neutrophil and 108 other cell types or tissues"/>
</dbReference>
<dbReference type="GO" id="GO:0005737">
    <property type="term" value="C:cytoplasm"/>
    <property type="evidence" value="ECO:0000318"/>
    <property type="project" value="GO_Central"/>
</dbReference>
<dbReference type="GO" id="GO:0005789">
    <property type="term" value="C:endoplasmic reticulum membrane"/>
    <property type="evidence" value="ECO:0007669"/>
    <property type="project" value="UniProtKB-SubCell"/>
</dbReference>
<dbReference type="GO" id="GO:0005615">
    <property type="term" value="C:extracellular space"/>
    <property type="evidence" value="ECO:0000318"/>
    <property type="project" value="GO_Central"/>
</dbReference>
<dbReference type="GO" id="GO:0016020">
    <property type="term" value="C:membrane"/>
    <property type="evidence" value="ECO:0000318"/>
    <property type="project" value="GO_Central"/>
</dbReference>
<dbReference type="GO" id="GO:0070006">
    <property type="term" value="F:metalloaminopeptidase activity"/>
    <property type="evidence" value="ECO:0000318"/>
    <property type="project" value="GO_Central"/>
</dbReference>
<dbReference type="GO" id="GO:0042277">
    <property type="term" value="F:peptide binding"/>
    <property type="evidence" value="ECO:0000318"/>
    <property type="project" value="GO_Central"/>
</dbReference>
<dbReference type="GO" id="GO:0008270">
    <property type="term" value="F:zinc ion binding"/>
    <property type="evidence" value="ECO:0000318"/>
    <property type="project" value="GO_Central"/>
</dbReference>
<dbReference type="GO" id="GO:0002250">
    <property type="term" value="P:adaptive immune response"/>
    <property type="evidence" value="ECO:0007669"/>
    <property type="project" value="UniProtKB-KW"/>
</dbReference>
<dbReference type="GO" id="GO:0043171">
    <property type="term" value="P:peptide catabolic process"/>
    <property type="evidence" value="ECO:0000318"/>
    <property type="project" value="GO_Central"/>
</dbReference>
<dbReference type="GO" id="GO:0006508">
    <property type="term" value="P:proteolysis"/>
    <property type="evidence" value="ECO:0000318"/>
    <property type="project" value="GO_Central"/>
</dbReference>
<dbReference type="CDD" id="cd09601">
    <property type="entry name" value="M1_APN-Q_like"/>
    <property type="match status" value="1"/>
</dbReference>
<dbReference type="FunFam" id="1.10.390.10:FF:000007">
    <property type="entry name" value="Aminopeptidase"/>
    <property type="match status" value="1"/>
</dbReference>
<dbReference type="FunFam" id="2.60.40.1730:FF:000046">
    <property type="entry name" value="Endoplasmic reticulum aminopeptidase 2"/>
    <property type="match status" value="1"/>
</dbReference>
<dbReference type="FunFam" id="1.25.50.20:FF:000003">
    <property type="entry name" value="Leucyl-cystinyl aminopeptidase"/>
    <property type="match status" value="1"/>
</dbReference>
<dbReference type="FunFam" id="2.60.40.1910:FF:000001">
    <property type="entry name" value="Leucyl-cystinyl aminopeptidase"/>
    <property type="match status" value="1"/>
</dbReference>
<dbReference type="Gene3D" id="1.25.50.20">
    <property type="match status" value="1"/>
</dbReference>
<dbReference type="Gene3D" id="2.60.40.1910">
    <property type="match status" value="1"/>
</dbReference>
<dbReference type="Gene3D" id="1.10.390.10">
    <property type="entry name" value="Neutral Protease Domain 2"/>
    <property type="match status" value="1"/>
</dbReference>
<dbReference type="Gene3D" id="2.60.40.1730">
    <property type="entry name" value="tricorn interacting facor f3 domain"/>
    <property type="match status" value="1"/>
</dbReference>
<dbReference type="InterPro" id="IPR045357">
    <property type="entry name" value="Aminopeptidase_N-like_N"/>
</dbReference>
<dbReference type="InterPro" id="IPR042097">
    <property type="entry name" value="Aminopeptidase_N-like_N_sf"/>
</dbReference>
<dbReference type="InterPro" id="IPR024571">
    <property type="entry name" value="ERAP1-like_C_dom"/>
</dbReference>
<dbReference type="InterPro" id="IPR034016">
    <property type="entry name" value="M1_APN-typ"/>
</dbReference>
<dbReference type="InterPro" id="IPR001930">
    <property type="entry name" value="Peptidase_M1"/>
</dbReference>
<dbReference type="InterPro" id="IPR050344">
    <property type="entry name" value="Peptidase_M1_aminopeptidases"/>
</dbReference>
<dbReference type="InterPro" id="IPR014782">
    <property type="entry name" value="Peptidase_M1_dom"/>
</dbReference>
<dbReference type="InterPro" id="IPR027268">
    <property type="entry name" value="Peptidase_M4/M1_CTD_sf"/>
</dbReference>
<dbReference type="PANTHER" id="PTHR11533:SF239">
    <property type="entry name" value="ENDOPLASMIC RETICULUM AMINOPEPTIDASE 2"/>
    <property type="match status" value="1"/>
</dbReference>
<dbReference type="PANTHER" id="PTHR11533">
    <property type="entry name" value="PROTEASE M1 ZINC METALLOPROTEASE"/>
    <property type="match status" value="1"/>
</dbReference>
<dbReference type="Pfam" id="PF11838">
    <property type="entry name" value="ERAP1_C"/>
    <property type="match status" value="1"/>
</dbReference>
<dbReference type="Pfam" id="PF01433">
    <property type="entry name" value="Peptidase_M1"/>
    <property type="match status" value="1"/>
</dbReference>
<dbReference type="Pfam" id="PF17900">
    <property type="entry name" value="Peptidase_M1_N"/>
    <property type="match status" value="1"/>
</dbReference>
<dbReference type="PRINTS" id="PR00756">
    <property type="entry name" value="ALADIPTASE"/>
</dbReference>
<dbReference type="SUPFAM" id="SSF63737">
    <property type="entry name" value="Leukotriene A4 hydrolase N-terminal domain"/>
    <property type="match status" value="1"/>
</dbReference>
<dbReference type="SUPFAM" id="SSF55486">
    <property type="entry name" value="Metalloproteases ('zincins'), catalytic domain"/>
    <property type="match status" value="1"/>
</dbReference>
<dbReference type="PROSITE" id="PS00142">
    <property type="entry name" value="ZINC_PROTEASE"/>
    <property type="match status" value="1"/>
</dbReference>
<gene>
    <name type="primary">ERAP2</name>
</gene>
<evidence type="ECO:0000250" key="1"/>
<evidence type="ECO:0000255" key="2"/>
<evidence type="ECO:0000255" key="3">
    <source>
        <dbReference type="PROSITE-ProRule" id="PRU10095"/>
    </source>
</evidence>
<evidence type="ECO:0000305" key="4"/>
<reference key="1">
    <citation type="submission" date="2007-07" db="EMBL/GenBank/DDBJ databases">
        <authorList>
            <consortium name="NIH - Mammalian Gene Collection (MGC) project"/>
        </authorList>
    </citation>
    <scope>NUCLEOTIDE SEQUENCE [LARGE SCALE MRNA]</scope>
    <source>
        <strain>Hereford</strain>
        <tissue>Thymus</tissue>
    </source>
</reference>
<sequence length="954" mass="109719">MANSCRKLIFNIYVVFYCSAVIMPQICICSQFTSSPIDQFNKDPKAFPVATNGEIFPWHELRLPTVVIPLHYDLLIHPNLTSLDFVASEKIEVLVRDATQFIILHSKDLEILNASLQSEEDVRYKKPGENLTVLSYPAHQQIALLVPEKLRAHLRYSVAIDFQAKLADGFEGFYKSTYRTLGGETRTIAVTDFEPTEARMAFPCFDEPLFKANFSIKIRRESRHIALSNMPKVKTIELEGGLLEDHFETTVRMSTYLVAYIVCDFTSVSGTASSGVKVSIYASPDKWSQTHYALEASVKLLDFYENYFDIHYPLPKLDLVAIPDFASGAMENWGLITYRETSLLFDPKTSSTSDKLWVTKVIAHELAHQWFGNLVTMEWWNDIWLNEGFARYMELISLNITYPELQFDDSFSNTCFEVIKRDSLNSSHPISNEAKTATQIKEMFDAVSYNKGACILNMLKDFLSEETFRKGIIHYLKKFTYRNAKNDDLWHSLSNNCLEGDSTSGGFCYSDSRKTSNTLAFLRENVELKEMMATWTLQKGIPLVVVKREGRSLRLQQERFLSGVFKEDPEWGTLQERYLWHIPVTYSTSSSQAIHRHILKLKTDTVDLSEKTDWVKFNVDSSGYYIVHYEGQGWDELITLLNQNHTLLRPKDRLGLIHDAFQLVSAGRLTLDKALDLTRYLQHETSIPALLKGLEYLELFYRMVERRNISDVTENLKHYLLQYFKPVIDTQSWLDEGSVWDRMLRSTVLKLACYLNHAPCIQKATELFSQWMESSGKLNIPADVLTIVYSVGAQTTAGWNYLLEQYELSLSGAEKNKILYALSTSKHQEKLMKLIELGMEGKVIKTQDLATLLFTTARNPKGQQLAWNFVKENWTHLLKKFELGSFPIRMIISGTTSHFSSKDELQEVKLFFESLKAQGSHLDIFQIILETISKNIKWLEKNLPTLRKWLLTSI</sequence>
<proteinExistence type="evidence at transcript level"/>
<accession>A6QPT7</accession>
<organism>
    <name type="scientific">Bos taurus</name>
    <name type="common">Bovine</name>
    <dbReference type="NCBI Taxonomy" id="9913"/>
    <lineage>
        <taxon>Eukaryota</taxon>
        <taxon>Metazoa</taxon>
        <taxon>Chordata</taxon>
        <taxon>Craniata</taxon>
        <taxon>Vertebrata</taxon>
        <taxon>Euteleostomi</taxon>
        <taxon>Mammalia</taxon>
        <taxon>Eutheria</taxon>
        <taxon>Laurasiatheria</taxon>
        <taxon>Artiodactyla</taxon>
        <taxon>Ruminantia</taxon>
        <taxon>Pecora</taxon>
        <taxon>Bovidae</taxon>
        <taxon>Bovinae</taxon>
        <taxon>Bos</taxon>
    </lineage>
</organism>
<keyword id="KW-1064">Adaptive immunity</keyword>
<keyword id="KW-0031">Aminopeptidase</keyword>
<keyword id="KW-1015">Disulfide bond</keyword>
<keyword id="KW-0256">Endoplasmic reticulum</keyword>
<keyword id="KW-0325">Glycoprotein</keyword>
<keyword id="KW-0378">Hydrolase</keyword>
<keyword id="KW-0391">Immunity</keyword>
<keyword id="KW-0472">Membrane</keyword>
<keyword id="KW-0479">Metal-binding</keyword>
<keyword id="KW-0482">Metalloprotease</keyword>
<keyword id="KW-0645">Protease</keyword>
<keyword id="KW-1185">Reference proteome</keyword>
<keyword id="KW-0735">Signal-anchor</keyword>
<keyword id="KW-0812">Transmembrane</keyword>
<keyword id="KW-1133">Transmembrane helix</keyword>
<keyword id="KW-0862">Zinc</keyword>